<feature type="chain" id="PRO_0000085109" description="Deoxyribodipyrimidine photo-lyase">
    <location>
        <begin position="1"/>
        <end position="481"/>
    </location>
</feature>
<feature type="domain" description="Photolyase/cryptochrome alpha/beta">
    <location>
        <begin position="1"/>
        <end position="136"/>
    </location>
</feature>
<feature type="region of interest" description="Interaction with DNA" evidence="1">
    <location>
        <begin position="283"/>
        <end position="290"/>
    </location>
</feature>
<feature type="region of interest" description="Interaction with DNA" evidence="1">
    <location>
        <begin position="349"/>
        <end position="350"/>
    </location>
</feature>
<feature type="binding site" evidence="1">
    <location>
        <position position="228"/>
    </location>
    <ligand>
        <name>FAD</name>
        <dbReference type="ChEBI" id="CHEBI:57692"/>
    </ligand>
</feature>
<feature type="binding site" evidence="1">
    <location>
        <position position="232"/>
    </location>
    <ligand>
        <name>DNA</name>
        <dbReference type="ChEBI" id="CHEBI:16991"/>
    </ligand>
</feature>
<feature type="binding site" evidence="1">
    <location>
        <begin position="240"/>
        <end position="244"/>
    </location>
    <ligand>
        <name>FAD</name>
        <dbReference type="ChEBI" id="CHEBI:57692"/>
    </ligand>
</feature>
<feature type="binding site" evidence="1">
    <location>
        <begin position="380"/>
        <end position="382"/>
    </location>
    <ligand>
        <name>FAD</name>
        <dbReference type="ChEBI" id="CHEBI:57692"/>
    </ligand>
</feature>
<feature type="binding site" evidence="1">
    <location>
        <position position="412"/>
    </location>
    <ligand>
        <name>DNA</name>
        <dbReference type="ChEBI" id="CHEBI:16991"/>
    </ligand>
</feature>
<feature type="site" description="Electron transfer via tryptophanyl radical" evidence="1">
    <location>
        <position position="314"/>
    </location>
</feature>
<feature type="site" description="Electron transfer via tryptophanyl radical" evidence="1">
    <location>
        <position position="367"/>
    </location>
</feature>
<feature type="site" description="Electron transfer via tryptophanyl radical" evidence="1">
    <location>
        <position position="390"/>
    </location>
</feature>
<dbReference type="EC" id="4.1.99.3"/>
<dbReference type="EMBL" id="M24544">
    <property type="protein sequence ID" value="AAA72749.1"/>
    <property type="molecule type" value="Genomic_DNA"/>
</dbReference>
<dbReference type="EMBL" id="AE004437">
    <property type="protein sequence ID" value="AAG19671.1"/>
    <property type="status" value="ALT_INIT"/>
    <property type="molecule type" value="Genomic_DNA"/>
</dbReference>
<dbReference type="PIR" id="B32580">
    <property type="entry name" value="B32580"/>
</dbReference>
<dbReference type="PIR" id="C84288">
    <property type="entry name" value="C84288"/>
</dbReference>
<dbReference type="RefSeq" id="WP_012289312.1">
    <property type="nucleotide sequence ID" value="NC_002607.1"/>
</dbReference>
<dbReference type="SMR" id="Q9HQ46"/>
<dbReference type="STRING" id="64091.VNG_1335G"/>
<dbReference type="PaxDb" id="64091-VNG_1335G"/>
<dbReference type="KEGG" id="hal:VNG_1335G"/>
<dbReference type="PATRIC" id="fig|64091.14.peg.1019"/>
<dbReference type="HOGENOM" id="CLU_010348_2_2_2"/>
<dbReference type="InParanoid" id="Q9HQ46"/>
<dbReference type="OrthoDB" id="11721at2157"/>
<dbReference type="PhylomeDB" id="Q9HQ46"/>
<dbReference type="Proteomes" id="UP000000554">
    <property type="component" value="Chromosome"/>
</dbReference>
<dbReference type="GO" id="GO:0003904">
    <property type="term" value="F:deoxyribodipyrimidine photo-lyase activity"/>
    <property type="evidence" value="ECO:0000318"/>
    <property type="project" value="GO_Central"/>
</dbReference>
<dbReference type="GO" id="GO:0003677">
    <property type="term" value="F:DNA binding"/>
    <property type="evidence" value="ECO:0000318"/>
    <property type="project" value="GO_Central"/>
</dbReference>
<dbReference type="GO" id="GO:0071949">
    <property type="term" value="F:FAD binding"/>
    <property type="evidence" value="ECO:0000318"/>
    <property type="project" value="GO_Central"/>
</dbReference>
<dbReference type="GO" id="GO:0006281">
    <property type="term" value="P:DNA repair"/>
    <property type="evidence" value="ECO:0007669"/>
    <property type="project" value="UniProtKB-KW"/>
</dbReference>
<dbReference type="Gene3D" id="1.25.40.80">
    <property type="match status" value="1"/>
</dbReference>
<dbReference type="Gene3D" id="1.10.579.10">
    <property type="entry name" value="DNA Cyclobutane Dipyrimidine Photolyase, subunit A, domain 3"/>
    <property type="match status" value="1"/>
</dbReference>
<dbReference type="Gene3D" id="3.40.50.620">
    <property type="entry name" value="HUPs"/>
    <property type="match status" value="1"/>
</dbReference>
<dbReference type="InterPro" id="IPR036134">
    <property type="entry name" value="Crypto/Photolyase_FAD-like_sf"/>
</dbReference>
<dbReference type="InterPro" id="IPR036155">
    <property type="entry name" value="Crypto/Photolyase_N_sf"/>
</dbReference>
<dbReference type="InterPro" id="IPR005101">
    <property type="entry name" value="Cryptochr/Photolyase_FAD-bd"/>
</dbReference>
<dbReference type="InterPro" id="IPR002081">
    <property type="entry name" value="Cryptochrome/DNA_photolyase_1"/>
</dbReference>
<dbReference type="InterPro" id="IPR018394">
    <property type="entry name" value="DNA_photolyase_1_CS_C"/>
</dbReference>
<dbReference type="InterPro" id="IPR006050">
    <property type="entry name" value="DNA_photolyase_N"/>
</dbReference>
<dbReference type="InterPro" id="IPR014729">
    <property type="entry name" value="Rossmann-like_a/b/a_fold"/>
</dbReference>
<dbReference type="PANTHER" id="PTHR11455">
    <property type="entry name" value="CRYPTOCHROME"/>
    <property type="match status" value="1"/>
</dbReference>
<dbReference type="PANTHER" id="PTHR11455:SF9">
    <property type="entry name" value="CRYPTOCHROME CIRCADIAN CLOCK 5 ISOFORM X1"/>
    <property type="match status" value="1"/>
</dbReference>
<dbReference type="Pfam" id="PF00875">
    <property type="entry name" value="DNA_photolyase"/>
    <property type="match status" value="1"/>
</dbReference>
<dbReference type="Pfam" id="PF03441">
    <property type="entry name" value="FAD_binding_7"/>
    <property type="match status" value="1"/>
</dbReference>
<dbReference type="PRINTS" id="PR00147">
    <property type="entry name" value="DNAPHOTLYASE"/>
</dbReference>
<dbReference type="SUPFAM" id="SSF48173">
    <property type="entry name" value="Cryptochrome/photolyase FAD-binding domain"/>
    <property type="match status" value="1"/>
</dbReference>
<dbReference type="SUPFAM" id="SSF52425">
    <property type="entry name" value="Cryptochrome/photolyase, N-terminal domain"/>
    <property type="match status" value="1"/>
</dbReference>
<dbReference type="PROSITE" id="PS00394">
    <property type="entry name" value="DNA_PHOTOLYASES_1_1"/>
    <property type="match status" value="1"/>
</dbReference>
<dbReference type="PROSITE" id="PS00691">
    <property type="entry name" value="DNA_PHOTOLYASES_1_2"/>
    <property type="match status" value="1"/>
</dbReference>
<dbReference type="PROSITE" id="PS51645">
    <property type="entry name" value="PHR_CRY_ALPHA_BETA"/>
    <property type="match status" value="1"/>
</dbReference>
<evidence type="ECO:0000250" key="1"/>
<evidence type="ECO:0000305" key="2"/>
<proteinExistence type="inferred from homology"/>
<gene>
    <name type="primary">phr</name>
    <name type="synonym">phr2</name>
    <name type="ordered locus">VNG_1335G</name>
</gene>
<name>PHR_HALSA</name>
<keyword id="KW-0157">Chromophore</keyword>
<keyword id="KW-0227">DNA damage</keyword>
<keyword id="KW-0234">DNA repair</keyword>
<keyword id="KW-0238">DNA-binding</keyword>
<keyword id="KW-0274">FAD</keyword>
<keyword id="KW-0285">Flavoprotein</keyword>
<keyword id="KW-0456">Lyase</keyword>
<keyword id="KW-0547">Nucleotide-binding</keyword>
<keyword id="KW-1185">Reference proteome</keyword>
<sequence>MQLFWHRRDLRTTDNRGLAAAAPGVTAVDGGHDQGPVAAVFCFDDEVLAHAAPPRVAFMLDALAALRERYRDLGSDLIVRHGDPAAVLPAVANDLDATRVVWNHDYSGLATDRDAGVRDALDAAGVAHAQFHDAVHHRPGEIRTNAGDPYSVYTYFWRKWQDREKNPPAPEPEPADLAADTALADTSPLPSVQELGFAEPEAAVPDAGTAAARSLLDAFRESGDIYRYEDRRDYPHEEPTSRLSPHLKFGTIGIRTVYEAARAAKSDADTDDERENVAAFIGQLAWREFYAQVLYFNQNVVSENFKAYEHPIEWRDDPAALQAWKDGETGYPIVDAGMRQLRAEAYMHNRVRMIVAAFLTKDLLVDWRAGYDWFREKLADHDTANDNGGWQWAASTGTDAQPYFRVFNPMTQGERYDPDADYITEFVPELRDVPADAIHSWHELSLSERRRHAPEYPDPIVDHSQRREDAIAMFERARGDE</sequence>
<organism>
    <name type="scientific">Halobacterium salinarum (strain ATCC 700922 / JCM 11081 / NRC-1)</name>
    <name type="common">Halobacterium halobium</name>
    <dbReference type="NCBI Taxonomy" id="64091"/>
    <lineage>
        <taxon>Archaea</taxon>
        <taxon>Methanobacteriati</taxon>
        <taxon>Methanobacteriota</taxon>
        <taxon>Stenosarchaea group</taxon>
        <taxon>Halobacteria</taxon>
        <taxon>Halobacteriales</taxon>
        <taxon>Halobacteriaceae</taxon>
        <taxon>Halobacterium</taxon>
        <taxon>Halobacterium salinarum NRC-34001</taxon>
    </lineage>
</organism>
<accession>Q9HQ46</accession>
<accession>P20377</accession>
<comment type="function">
    <text>Involved in repair of UV radiation-induced DNA damage. Catalyzes the light-dependent monomerization (300-600 nm) of cyclobutyl pyrimidine dimers (in cis-syn configuration), which are formed between adjacent bases on the same DNA strand upon exposure to ultraviolet radiation.</text>
</comment>
<comment type="catalytic activity">
    <reaction>
        <text>cyclobutadipyrimidine (in DNA) = 2 pyrimidine residues (in DNA).</text>
        <dbReference type="EC" id="4.1.99.3"/>
    </reaction>
</comment>
<comment type="cofactor">
    <cofactor evidence="1">
        <name>FAD</name>
        <dbReference type="ChEBI" id="CHEBI:57692"/>
    </cofactor>
    <text evidence="1">Binds 1 FAD per subunit.</text>
</comment>
<comment type="cofactor">
    <cofactor evidence="1">
        <name>coenzyme F420-(gamma-Glu)n</name>
        <dbReference type="ChEBI" id="CHEBI:133980"/>
    </cofactor>
    <text evidence="1">Binds 1 coenzyme F420 non-covalently per subunit.</text>
</comment>
<comment type="subunit">
    <text evidence="1">Monomer.</text>
</comment>
<comment type="similarity">
    <text evidence="2">Belongs to the DNA photolyase class-1 family.</text>
</comment>
<comment type="sequence caution" evidence="2">
    <conflict type="erroneous initiation">
        <sequence resource="EMBL-CDS" id="AAG19671"/>
    </conflict>
</comment>
<protein>
    <recommendedName>
        <fullName>Deoxyribodipyrimidine photo-lyase</fullName>
        <ecNumber>4.1.99.3</ecNumber>
    </recommendedName>
    <alternativeName>
        <fullName>DNA photolyase</fullName>
    </alternativeName>
    <alternativeName>
        <fullName>Photoreactivating enzyme</fullName>
    </alternativeName>
</protein>
<reference key="1">
    <citation type="journal article" date="1989" name="J. Bacteriol.">
        <title>Tandem arrangement of photolyase and superoxide dismutase genes in Halobacterium halobium.</title>
        <authorList>
            <person name="Takao M."/>
            <person name="Kobayashi T."/>
            <person name="Oikawa A."/>
            <person name="Yasui A."/>
        </authorList>
    </citation>
    <scope>NUCLEOTIDE SEQUENCE [GENOMIC DNA]</scope>
</reference>
<reference key="2">
    <citation type="journal article" date="2000" name="Proc. Natl. Acad. Sci. U.S.A.">
        <title>Genome sequence of Halobacterium species NRC-1.</title>
        <authorList>
            <person name="Ng W.V."/>
            <person name="Kennedy S.P."/>
            <person name="Mahairas G.G."/>
            <person name="Berquist B."/>
            <person name="Pan M."/>
            <person name="Shukla H.D."/>
            <person name="Lasky S.R."/>
            <person name="Baliga N.S."/>
            <person name="Thorsson V."/>
            <person name="Sbrogna J."/>
            <person name="Swartzell S."/>
            <person name="Weir D."/>
            <person name="Hall J."/>
            <person name="Dahl T.A."/>
            <person name="Welti R."/>
            <person name="Goo Y.A."/>
            <person name="Leithauser B."/>
            <person name="Keller K."/>
            <person name="Cruz R."/>
            <person name="Danson M.J."/>
            <person name="Hough D.W."/>
            <person name="Maddocks D.G."/>
            <person name="Jablonski P.E."/>
            <person name="Krebs M.P."/>
            <person name="Angevine C.M."/>
            <person name="Dale H."/>
            <person name="Isenbarger T.A."/>
            <person name="Peck R.F."/>
            <person name="Pohlschroder M."/>
            <person name="Spudich J.L."/>
            <person name="Jung K.-H."/>
            <person name="Alam M."/>
            <person name="Freitas T."/>
            <person name="Hou S."/>
            <person name="Daniels C.J."/>
            <person name="Dennis P.P."/>
            <person name="Omer A.D."/>
            <person name="Ebhardt H."/>
            <person name="Lowe T.M."/>
            <person name="Liang P."/>
            <person name="Riley M."/>
            <person name="Hood L."/>
            <person name="DasSarma S."/>
        </authorList>
    </citation>
    <scope>NUCLEOTIDE SEQUENCE [LARGE SCALE GENOMIC DNA]</scope>
    <source>
        <strain>ATCC 700922 / JCM 11081 / NRC-1</strain>
    </source>
</reference>